<evidence type="ECO:0000255" key="1"/>
<evidence type="ECO:0000305" key="2"/>
<evidence type="ECO:0007829" key="3">
    <source>
        <dbReference type="PDB" id="7TLJ"/>
    </source>
</evidence>
<sequence length="124" mass="14393">MFSFIDDIPSFEQIKARVRDDLRKHGWEKRWNDSRLVQKSRELLNDEELKIDPATWIWKRMPSREEVAARRQRDFETVWKYRYRLGGFASGALLALALAGIFSTGNFGGSSDAGNRPSVVYPIE</sequence>
<organism>
    <name type="scientific">Cereibacter sphaeroides</name>
    <name type="common">Rhodobacter sphaeroides</name>
    <dbReference type="NCBI Taxonomy" id="1063"/>
    <lineage>
        <taxon>Bacteria</taxon>
        <taxon>Pseudomonadati</taxon>
        <taxon>Pseudomonadota</taxon>
        <taxon>Alphaproteobacteria</taxon>
        <taxon>Rhodobacterales</taxon>
        <taxon>Paracoccaceae</taxon>
        <taxon>Cereibacter</taxon>
    </lineage>
</organism>
<dbReference type="EMBL" id="M68939">
    <property type="protein sequence ID" value="AAA26107.1"/>
    <property type="molecule type" value="Genomic_DNA"/>
</dbReference>
<dbReference type="PIR" id="A40794">
    <property type="entry name" value="A40794"/>
</dbReference>
<dbReference type="RefSeq" id="WP_002719838.1">
    <property type="nucleotide sequence ID" value="NZ_WTFI01000002.1"/>
</dbReference>
<dbReference type="PDB" id="7TLJ">
    <property type="method" value="EM"/>
    <property type="resolution" value="2.91 A"/>
    <property type="chains" value="D/H=1-124"/>
</dbReference>
<dbReference type="PDBsum" id="7TLJ"/>
<dbReference type="EMDB" id="EMD-25989"/>
<dbReference type="SMR" id="P16536"/>
<dbReference type="GeneID" id="3720378"/>
<dbReference type="OMA" id="DLRKYGW"/>
<dbReference type="GO" id="GO:0005886">
    <property type="term" value="C:plasma membrane"/>
    <property type="evidence" value="ECO:0007669"/>
    <property type="project" value="UniProtKB-SubCell"/>
</dbReference>
<dbReference type="GO" id="GO:0016491">
    <property type="term" value="F:oxidoreductase activity"/>
    <property type="evidence" value="ECO:0007669"/>
    <property type="project" value="UniProtKB-KW"/>
</dbReference>
<accession>P16536</accession>
<comment type="function">
    <text>Component of the ubiquinol-cytochrome c reductase complex (complex III or cytochrome b-c1 complex), which is a respiratory chain that generates an electrochemical potential coupled to ATP synthesis.</text>
</comment>
<comment type="subcellular location">
    <subcellularLocation>
        <location evidence="2">Cell inner membrane</location>
        <topology evidence="2">Single-pass membrane protein</topology>
    </subcellularLocation>
</comment>
<proteinExistence type="evidence at protein level"/>
<keyword id="KW-0002">3D-structure</keyword>
<keyword id="KW-0997">Cell inner membrane</keyword>
<keyword id="KW-1003">Cell membrane</keyword>
<keyword id="KW-0903">Direct protein sequencing</keyword>
<keyword id="KW-0249">Electron transport</keyword>
<keyword id="KW-0472">Membrane</keyword>
<keyword id="KW-0560">Oxidoreductase</keyword>
<keyword id="KW-0679">Respiratory chain</keyword>
<keyword id="KW-0812">Transmembrane</keyword>
<keyword id="KW-1133">Transmembrane helix</keyword>
<keyword id="KW-0813">Transport</keyword>
<protein>
    <recommendedName>
        <fullName>14 kDa peptide of ubiquinol-cytochrome c2 oxidoreductase complex</fullName>
    </recommendedName>
</protein>
<reference key="1">
    <citation type="journal article" date="1991" name="J. Biol. Chem.">
        <title>Subunit IV (Mr = 14,384) of the cytochrome b-c1 complex from Rhodobacter sphaeroides. Cloning, DNA sequencing, and ubiquinone binding domain.</title>
        <authorList>
            <person name="Usui S."/>
            <person name="Yu L."/>
        </authorList>
    </citation>
    <scope>NUCLEOTIDE SEQUENCE [GENOMIC DNA]</scope>
</reference>
<reference key="2">
    <citation type="journal article" date="1990" name="J. Biol. Chem.">
        <title>Chromatographic and protein chemical analysis of the ubiquinol-cytochrome c2 oxidoreductase isolated from Rhodobacter sphaeroides.</title>
        <authorList>
            <person name="Purvis D.J."/>
            <person name="Theiler R."/>
            <person name="Niederman R.A."/>
        </authorList>
    </citation>
    <scope>PROTEIN SEQUENCE OF 61-108</scope>
</reference>
<name>14KD_CERSP</name>
<feature type="chain" id="PRO_0000064353" description="14 kDa peptide of ubiquinol-cytochrome c2 oxidoreductase complex">
    <location>
        <begin position="1"/>
        <end position="124"/>
    </location>
</feature>
<feature type="transmembrane region" description="Helical" evidence="1">
    <location>
        <begin position="85"/>
        <end position="102"/>
    </location>
</feature>
<feature type="helix" evidence="3">
    <location>
        <begin position="82"/>
        <end position="99"/>
    </location>
</feature>